<evidence type="ECO:0000250" key="1">
    <source>
        <dbReference type="UniProtKB" id="O44249"/>
    </source>
</evidence>
<evidence type="ECO:0000250" key="2">
    <source>
        <dbReference type="UniProtKB" id="Q9W1V6"/>
    </source>
</evidence>
<evidence type="ECO:0000255" key="3"/>
<evidence type="ECO:0000269" key="4">
    <source ref="1"/>
</evidence>
<evidence type="ECO:0000303" key="5">
    <source ref="1"/>
</evidence>
<evidence type="ECO:0000305" key="6"/>
<proteinExistence type="evidence at protein level"/>
<keyword id="KW-0186">Copper</keyword>
<keyword id="KW-0903">Direct protein sequencing</keyword>
<keyword id="KW-0470">Melanin biosynthesis</keyword>
<keyword id="KW-0479">Metal-binding</keyword>
<keyword id="KW-0503">Monooxygenase</keyword>
<keyword id="KW-0560">Oxidoreductase</keyword>
<keyword id="KW-0964">Secreted</keyword>
<keyword id="KW-0865">Zymogen</keyword>
<accession>C0HJM0</accession>
<gene>
    <name evidence="2" type="primary">PPO3</name>
</gene>
<feature type="chain" id="PRO_0000430347" description="Phenoloxidase 3">
    <location>
        <begin position="1" status="less than"/>
        <end position="71" status="greater than"/>
    </location>
</feature>
<feature type="binding site" evidence="1">
    <location>
        <position position="3"/>
    </location>
    <ligand>
        <name>Cu cation</name>
        <dbReference type="ChEBI" id="CHEBI:23378"/>
        <label>A</label>
    </ligand>
</feature>
<feature type="binding site" evidence="1">
    <location>
        <position position="29"/>
    </location>
    <ligand>
        <name>Cu cation</name>
        <dbReference type="ChEBI" id="CHEBI:23378"/>
        <label>A</label>
    </ligand>
</feature>
<feature type="non-terminal residue" evidence="5">
    <location>
        <position position="1"/>
    </location>
</feature>
<feature type="non-terminal residue" evidence="5">
    <location>
        <position position="71"/>
    </location>
</feature>
<protein>
    <recommendedName>
        <fullName evidence="2">Phenoloxidase 3</fullName>
        <ecNumber evidence="4">1.14.18.1</ecNumber>
    </recommendedName>
    <alternativeName>
        <fullName>Tyrosinase 3</fullName>
    </alternativeName>
</protein>
<name>PPO3_SARAR</name>
<dbReference type="EC" id="1.14.18.1" evidence="4"/>
<dbReference type="SMR" id="C0HJM0"/>
<dbReference type="GO" id="GO:0005576">
    <property type="term" value="C:extracellular region"/>
    <property type="evidence" value="ECO:0007669"/>
    <property type="project" value="UniProtKB-SubCell"/>
</dbReference>
<dbReference type="GO" id="GO:0046872">
    <property type="term" value="F:metal ion binding"/>
    <property type="evidence" value="ECO:0007669"/>
    <property type="project" value="UniProtKB-KW"/>
</dbReference>
<dbReference type="GO" id="GO:0004503">
    <property type="term" value="F:tyrosinase activity"/>
    <property type="evidence" value="ECO:0007669"/>
    <property type="project" value="UniProtKB-EC"/>
</dbReference>
<dbReference type="GO" id="GO:0042438">
    <property type="term" value="P:melanin biosynthetic process"/>
    <property type="evidence" value="ECO:0007669"/>
    <property type="project" value="UniProtKB-KW"/>
</dbReference>
<dbReference type="Gene3D" id="1.10.1280.10">
    <property type="entry name" value="Di-copper center containing domain from catechol oxidase"/>
    <property type="match status" value="1"/>
</dbReference>
<dbReference type="InterPro" id="IPR008922">
    <property type="entry name" value="Di-copper_centre_dom_sf"/>
</dbReference>
<dbReference type="InterPro" id="IPR013788">
    <property type="entry name" value="Hemocyanin/hexamerin"/>
</dbReference>
<dbReference type="InterPro" id="IPR000896">
    <property type="entry name" value="Hemocyanin/hexamerin_mid_dom"/>
</dbReference>
<dbReference type="PANTHER" id="PTHR11511">
    <property type="entry name" value="LARVAL STORAGE PROTEIN/PHENOLOXIDASE"/>
    <property type="match status" value="1"/>
</dbReference>
<dbReference type="PANTHER" id="PTHR11511:SF4">
    <property type="entry name" value="PHENOLOXIDASE 2-RELATED"/>
    <property type="match status" value="1"/>
</dbReference>
<dbReference type="Pfam" id="PF00372">
    <property type="entry name" value="Hemocyanin_M"/>
    <property type="match status" value="1"/>
</dbReference>
<dbReference type="SUPFAM" id="SSF48056">
    <property type="entry name" value="Di-copper centre-containing domain"/>
    <property type="match status" value="1"/>
</dbReference>
<comment type="function">
    <text evidence="1">This is a copper-containing oxidase that functions in the formation of pigments such as melanins and other polyphenolic compounds. Catalyzes the rate-limiting conversions of tyrosine to DOPA, DOPA to DOPA-quinone and possibly 5,6 dihydroxyindole to indole-5'6 quinone (By similarity).</text>
</comment>
<comment type="catalytic activity">
    <reaction evidence="4">
        <text>2 L-dopa + O2 = 2 L-dopaquinone + 2 H2O</text>
        <dbReference type="Rhea" id="RHEA:34287"/>
        <dbReference type="ChEBI" id="CHEBI:15377"/>
        <dbReference type="ChEBI" id="CHEBI:15379"/>
        <dbReference type="ChEBI" id="CHEBI:57504"/>
        <dbReference type="ChEBI" id="CHEBI:57924"/>
        <dbReference type="EC" id="1.14.18.1"/>
    </reaction>
</comment>
<comment type="catalytic activity">
    <reaction evidence="4">
        <text>L-tyrosine + O2 = L-dopaquinone + H2O</text>
        <dbReference type="Rhea" id="RHEA:18117"/>
        <dbReference type="ChEBI" id="CHEBI:15377"/>
        <dbReference type="ChEBI" id="CHEBI:15379"/>
        <dbReference type="ChEBI" id="CHEBI:57924"/>
        <dbReference type="ChEBI" id="CHEBI:58315"/>
        <dbReference type="EC" id="1.14.18.1"/>
    </reaction>
</comment>
<comment type="cofactor">
    <cofactor evidence="1">
        <name>Cu(2+)</name>
        <dbReference type="ChEBI" id="CHEBI:29036"/>
    </cofactor>
    <text evidence="1">Binds 2 copper ions per subunit.</text>
</comment>
<comment type="biophysicochemical properties">
    <kinetics>
        <KM evidence="4">0.159 mM for L-dopa</KM>
        <Vmax evidence="4">151.3 umol/min/ug enzyme with L-dopa as substrate</Vmax>
        <text evidence="4">Enzymes were activated using methanol.</text>
    </kinetics>
</comment>
<comment type="subcellular location">
    <subcellularLocation>
        <location evidence="1">Secreted</location>
    </subcellularLocation>
</comment>
<comment type="tissue specificity">
    <text evidence="4">Hemocytes and plasma.</text>
</comment>
<comment type="PTM">
    <text evidence="2">Upon activation, a trypsin type protease cleaves prophenol oxidase to yield the active enzyme.</text>
</comment>
<comment type="similarity">
    <text evidence="3">Belongs to the tyrosinase family.</text>
</comment>
<organism>
    <name type="scientific">Sarcophaga argyrostoma</name>
    <name type="common">Flesh fly</name>
    <name type="synonym">Liopygia argyrostoma</name>
    <dbReference type="NCBI Taxonomy" id="128967"/>
    <lineage>
        <taxon>Eukaryota</taxon>
        <taxon>Metazoa</taxon>
        <taxon>Ecdysozoa</taxon>
        <taxon>Arthropoda</taxon>
        <taxon>Hexapoda</taxon>
        <taxon>Insecta</taxon>
        <taxon>Pterygota</taxon>
        <taxon>Neoptera</taxon>
        <taxon>Endopterygota</taxon>
        <taxon>Diptera</taxon>
        <taxon>Brachycera</taxon>
        <taxon>Muscomorpha</taxon>
        <taxon>Oestroidea</taxon>
        <taxon>Sarcophagidae</taxon>
        <taxon>Sarcophaga</taxon>
        <taxon>Liopygia</taxon>
    </lineage>
</organism>
<sequence length="71" mass="8623">HWHLVYPIEAPDRSIVDKDRRGELFYYMHQQIIARYNAERYNAERLSNHMARVQPFNNLDEPIAEGYFPKM</sequence>
<reference evidence="6" key="1">
    <citation type="submission" date="2014-06" db="UniProtKB">
        <title>Purification and characterization of prophenoloxidase from flesh fly, Sarcophaga argyrostoma.</title>
        <authorList>
            <person name="Mohamed A.A."/>
            <person name="Dorrah M.A."/>
            <person name="Ayaad T.H."/>
        </authorList>
    </citation>
    <scope>PROTEIN SEQUENCE</scope>
    <scope>CATALYTIC ACTIVITY</scope>
    <scope>SUBCELLULAR LOCATION</scope>
    <scope>TISSUE SPECIFICITY</scope>
    <scope>BIOPHYSICOCHEMICAL PROPERTIES</scope>
</reference>